<accession>B0BQ51</accession>
<reference key="1">
    <citation type="journal article" date="2008" name="PLoS ONE">
        <title>Genome biology of Actinobacillus pleuropneumoniae JL03, an isolate of serotype 3 prevalent in China.</title>
        <authorList>
            <person name="Xu Z."/>
            <person name="Zhou Y."/>
            <person name="Li L."/>
            <person name="Zhou R."/>
            <person name="Xiao S."/>
            <person name="Wan Y."/>
            <person name="Zhang S."/>
            <person name="Wang K."/>
            <person name="Li W."/>
            <person name="Li L."/>
            <person name="Jin H."/>
            <person name="Kang M."/>
            <person name="Dalai B."/>
            <person name="Li T."/>
            <person name="Liu L."/>
            <person name="Cheng Y."/>
            <person name="Zhang L."/>
            <person name="Xu T."/>
            <person name="Zheng H."/>
            <person name="Pu S."/>
            <person name="Wang B."/>
            <person name="Gu W."/>
            <person name="Zhang X.L."/>
            <person name="Zhu G.-F."/>
            <person name="Wang S."/>
            <person name="Zhao G.-P."/>
            <person name="Chen H."/>
        </authorList>
    </citation>
    <scope>NUCLEOTIDE SEQUENCE [LARGE SCALE GENOMIC DNA]</scope>
    <source>
        <strain>JL03</strain>
    </source>
</reference>
<sequence>MLLIDIKDKELSQEEVEILEHPLVSGLILFSRNFHDKVQLEALVKSIRQRVKKPLLITVDQEGGRVQRFREGFTKLPAMQAFHTLAKNPQESTALARQTGWLMAAEMFALDIDLSFAPVLDLGHQCKAIGDRSFGENPDAMLPIAEAFIDGMREMGMATTGKHFPGHGHVLADSHLETPFDDRPKEAIFNRDILPFKQLISKGKLSAVMPAHVIYTQCDSQPASGSEYWLKQVLRNQLNFNGVIFSDDLGMKGAGFMGNFVERSEKAIHAGCDLLLLCNEPEGVIQVLDGLKYQPTKTQTERHISLMKRKTVRWNELEASPRYQQAQQRLTALQNEWLEYKAQHC</sequence>
<organism>
    <name type="scientific">Actinobacillus pleuropneumoniae serotype 3 (strain JL03)</name>
    <dbReference type="NCBI Taxonomy" id="434271"/>
    <lineage>
        <taxon>Bacteria</taxon>
        <taxon>Pseudomonadati</taxon>
        <taxon>Pseudomonadota</taxon>
        <taxon>Gammaproteobacteria</taxon>
        <taxon>Pasteurellales</taxon>
        <taxon>Pasteurellaceae</taxon>
        <taxon>Actinobacillus</taxon>
    </lineage>
</organism>
<proteinExistence type="inferred from homology"/>
<keyword id="KW-0131">Cell cycle</keyword>
<keyword id="KW-0132">Cell division</keyword>
<keyword id="KW-0133">Cell shape</keyword>
<keyword id="KW-0961">Cell wall biogenesis/degradation</keyword>
<keyword id="KW-0963">Cytoplasm</keyword>
<keyword id="KW-0326">Glycosidase</keyword>
<keyword id="KW-0378">Hydrolase</keyword>
<keyword id="KW-0573">Peptidoglycan synthesis</keyword>
<feature type="chain" id="PRO_1000121052" description="Beta-hexosaminidase">
    <location>
        <begin position="1"/>
        <end position="345"/>
    </location>
</feature>
<feature type="active site" description="Proton donor/acceptor" evidence="1">
    <location>
        <position position="175"/>
    </location>
</feature>
<feature type="active site" description="Nucleophile" evidence="1">
    <location>
        <position position="247"/>
    </location>
</feature>
<feature type="binding site" evidence="1">
    <location>
        <position position="60"/>
    </location>
    <ligand>
        <name>substrate</name>
    </ligand>
</feature>
<feature type="binding site" evidence="1">
    <location>
        <position position="68"/>
    </location>
    <ligand>
        <name>substrate</name>
    </ligand>
</feature>
<feature type="binding site" evidence="1">
    <location>
        <position position="132"/>
    </location>
    <ligand>
        <name>substrate</name>
    </ligand>
</feature>
<feature type="binding site" evidence="1">
    <location>
        <begin position="162"/>
        <end position="163"/>
    </location>
    <ligand>
        <name>substrate</name>
    </ligand>
</feature>
<feature type="site" description="Important for catalytic activity" evidence="1">
    <location>
        <position position="173"/>
    </location>
</feature>
<gene>
    <name evidence="1" type="primary">nagZ</name>
    <name type="ordered locus">APJL_1130</name>
</gene>
<protein>
    <recommendedName>
        <fullName evidence="1">Beta-hexosaminidase</fullName>
        <ecNumber evidence="1">3.2.1.52</ecNumber>
    </recommendedName>
    <alternativeName>
        <fullName evidence="1">Beta-N-acetylhexosaminidase</fullName>
    </alternativeName>
    <alternativeName>
        <fullName evidence="1">N-acetyl-beta-glucosaminidase</fullName>
    </alternativeName>
</protein>
<evidence type="ECO:0000255" key="1">
    <source>
        <dbReference type="HAMAP-Rule" id="MF_00364"/>
    </source>
</evidence>
<comment type="function">
    <text evidence="1">Plays a role in peptidoglycan recycling by cleaving the terminal beta-1,4-linked N-acetylglucosamine (GlcNAc) from peptide-linked peptidoglycan fragments, giving rise to free GlcNAc, anhydro-N-acetylmuramic acid and anhydro-N-acetylmuramic acid-linked peptides.</text>
</comment>
<comment type="catalytic activity">
    <reaction evidence="1">
        <text>Hydrolysis of terminal non-reducing N-acetyl-D-hexosamine residues in N-acetyl-beta-D-hexosaminides.</text>
        <dbReference type="EC" id="3.2.1.52"/>
    </reaction>
</comment>
<comment type="pathway">
    <text evidence="1">Cell wall biogenesis; peptidoglycan recycling.</text>
</comment>
<comment type="subcellular location">
    <subcellularLocation>
        <location evidence="1">Cytoplasm</location>
    </subcellularLocation>
</comment>
<comment type="similarity">
    <text evidence="1">Belongs to the glycosyl hydrolase 3 family. NagZ subfamily.</text>
</comment>
<dbReference type="EC" id="3.2.1.52" evidence="1"/>
<dbReference type="EMBL" id="CP000687">
    <property type="protein sequence ID" value="ABY69686.1"/>
    <property type="molecule type" value="Genomic_DNA"/>
</dbReference>
<dbReference type="RefSeq" id="WP_012263104.1">
    <property type="nucleotide sequence ID" value="NC_010278.1"/>
</dbReference>
<dbReference type="SMR" id="B0BQ51"/>
<dbReference type="CAZy" id="GH3">
    <property type="family name" value="Glycoside Hydrolase Family 3"/>
</dbReference>
<dbReference type="KEGG" id="apj:APJL_1130"/>
<dbReference type="HOGENOM" id="CLU_008392_0_0_6"/>
<dbReference type="UniPathway" id="UPA00544"/>
<dbReference type="Proteomes" id="UP000008547">
    <property type="component" value="Chromosome"/>
</dbReference>
<dbReference type="GO" id="GO:0005737">
    <property type="term" value="C:cytoplasm"/>
    <property type="evidence" value="ECO:0007669"/>
    <property type="project" value="UniProtKB-SubCell"/>
</dbReference>
<dbReference type="GO" id="GO:0004563">
    <property type="term" value="F:beta-N-acetylhexosaminidase activity"/>
    <property type="evidence" value="ECO:0007669"/>
    <property type="project" value="UniProtKB-UniRule"/>
</dbReference>
<dbReference type="GO" id="GO:0005975">
    <property type="term" value="P:carbohydrate metabolic process"/>
    <property type="evidence" value="ECO:0007669"/>
    <property type="project" value="InterPro"/>
</dbReference>
<dbReference type="GO" id="GO:0051301">
    <property type="term" value="P:cell division"/>
    <property type="evidence" value="ECO:0007669"/>
    <property type="project" value="UniProtKB-KW"/>
</dbReference>
<dbReference type="GO" id="GO:0071555">
    <property type="term" value="P:cell wall organization"/>
    <property type="evidence" value="ECO:0007669"/>
    <property type="project" value="UniProtKB-KW"/>
</dbReference>
<dbReference type="GO" id="GO:0009252">
    <property type="term" value="P:peptidoglycan biosynthetic process"/>
    <property type="evidence" value="ECO:0007669"/>
    <property type="project" value="UniProtKB-KW"/>
</dbReference>
<dbReference type="GO" id="GO:0009254">
    <property type="term" value="P:peptidoglycan turnover"/>
    <property type="evidence" value="ECO:0007669"/>
    <property type="project" value="UniProtKB-UniRule"/>
</dbReference>
<dbReference type="GO" id="GO:0008360">
    <property type="term" value="P:regulation of cell shape"/>
    <property type="evidence" value="ECO:0007669"/>
    <property type="project" value="UniProtKB-KW"/>
</dbReference>
<dbReference type="FunFam" id="3.20.20.300:FF:000001">
    <property type="entry name" value="Beta-hexosaminidase"/>
    <property type="match status" value="1"/>
</dbReference>
<dbReference type="Gene3D" id="3.20.20.300">
    <property type="entry name" value="Glycoside hydrolase, family 3, N-terminal domain"/>
    <property type="match status" value="1"/>
</dbReference>
<dbReference type="HAMAP" id="MF_00364">
    <property type="entry name" value="NagZ"/>
    <property type="match status" value="1"/>
</dbReference>
<dbReference type="InterPro" id="IPR022956">
    <property type="entry name" value="Beta_hexosaminidase_bac"/>
</dbReference>
<dbReference type="InterPro" id="IPR019800">
    <property type="entry name" value="Glyco_hydro_3_AS"/>
</dbReference>
<dbReference type="InterPro" id="IPR001764">
    <property type="entry name" value="Glyco_hydro_3_N"/>
</dbReference>
<dbReference type="InterPro" id="IPR036962">
    <property type="entry name" value="Glyco_hydro_3_N_sf"/>
</dbReference>
<dbReference type="InterPro" id="IPR017853">
    <property type="entry name" value="Glycoside_hydrolase_SF"/>
</dbReference>
<dbReference type="InterPro" id="IPR050226">
    <property type="entry name" value="NagZ_Beta-hexosaminidase"/>
</dbReference>
<dbReference type="NCBIfam" id="NF003740">
    <property type="entry name" value="PRK05337.1"/>
    <property type="match status" value="1"/>
</dbReference>
<dbReference type="PANTHER" id="PTHR30480:SF13">
    <property type="entry name" value="BETA-HEXOSAMINIDASE"/>
    <property type="match status" value="1"/>
</dbReference>
<dbReference type="PANTHER" id="PTHR30480">
    <property type="entry name" value="BETA-HEXOSAMINIDASE-RELATED"/>
    <property type="match status" value="1"/>
</dbReference>
<dbReference type="Pfam" id="PF00933">
    <property type="entry name" value="Glyco_hydro_3"/>
    <property type="match status" value="1"/>
</dbReference>
<dbReference type="SUPFAM" id="SSF51445">
    <property type="entry name" value="(Trans)glycosidases"/>
    <property type="match status" value="1"/>
</dbReference>
<dbReference type="PROSITE" id="PS00775">
    <property type="entry name" value="GLYCOSYL_HYDROL_F3"/>
    <property type="match status" value="1"/>
</dbReference>
<name>NAGZ_ACTPJ</name>